<organism>
    <name type="scientific">Mus musculus</name>
    <name type="common">Mouse</name>
    <dbReference type="NCBI Taxonomy" id="10090"/>
    <lineage>
        <taxon>Eukaryota</taxon>
        <taxon>Metazoa</taxon>
        <taxon>Chordata</taxon>
        <taxon>Craniata</taxon>
        <taxon>Vertebrata</taxon>
        <taxon>Euteleostomi</taxon>
        <taxon>Mammalia</taxon>
        <taxon>Eutheria</taxon>
        <taxon>Euarchontoglires</taxon>
        <taxon>Glires</taxon>
        <taxon>Rodentia</taxon>
        <taxon>Myomorpha</taxon>
        <taxon>Muroidea</taxon>
        <taxon>Muridae</taxon>
        <taxon>Murinae</taxon>
        <taxon>Mus</taxon>
        <taxon>Mus</taxon>
    </lineage>
</organism>
<accession>P62897</accession>
<accession>P00009</accession>
<accession>Q8C2S2</accession>
<comment type="function">
    <text evidence="3">Electron carrier protein. The oxidized form of the cytochrome c heme group can accept an electron from the heme group of the cytochrome c1 subunit of cytochrome reductase. Cytochrome c then transfers this electron to the cytochrome oxidase complex, the final protein carrier in the mitochondrial electron-transport chain.</text>
</comment>
<comment type="function">
    <text evidence="3">Plays a role in apoptosis. Suppression of the anti-apoptotic members or activation of the pro-apoptotic members of the Bcl-2 family leads to altered mitochondrial membrane permeability resulting in release of cytochrome c into the cytosol. Binding of cytochrome c to Apaf-1 triggers the activation of caspase-9, which then accelerates apoptosis by activating other caspases.</text>
</comment>
<comment type="subcellular location">
    <subcellularLocation>
        <location>Mitochondrion intermembrane space</location>
    </subcellularLocation>
    <text>Loosely associated with the inner membrane.</text>
</comment>
<comment type="tissue specificity">
    <text>Found in embryos and in adult liver and heart.</text>
</comment>
<comment type="PTM">
    <text>Binds 1 heme c group covalently per subunit.</text>
</comment>
<comment type="PTM">
    <text evidence="1">Phosphorylation at Tyr-49 and Tyr-98 both reduce by half the turnover in the reaction with cytochrome c oxidase, down-regulating mitochondrial respiration.</text>
</comment>
<comment type="similarity">
    <text evidence="5">Belongs to the cytochrome c family.</text>
</comment>
<comment type="online information" name="Protein Spotlight">
    <link uri="https://www.proteinspotlight.org/back_issues/076"/>
    <text>Life shuttle - Issue 76 of November 2006</text>
</comment>
<name>CYC_MOUSE</name>
<evidence type="ECO:0000250" key="1"/>
<evidence type="ECO:0000250" key="2">
    <source>
        <dbReference type="UniProtKB" id="P62894"/>
    </source>
</evidence>
<evidence type="ECO:0000269" key="3">
    <source>
    </source>
</evidence>
<evidence type="ECO:0000269" key="4">
    <source>
    </source>
</evidence>
<evidence type="ECO:0000305" key="5"/>
<evidence type="ECO:0007744" key="6">
    <source>
    </source>
</evidence>
<evidence type="ECO:0007744" key="7">
    <source>
    </source>
</evidence>
<sequence>MGDVEKGKKIFVQKCAQCHTVEKGGKHKTGPNLHGLFGRKTGQAAGFSYTDANKNKGITWGEDTLMEYLENPKKYIPGTKMIFAGIKKKGERADLIAYLKKATNE</sequence>
<keyword id="KW-0007">Acetylation</keyword>
<keyword id="KW-0053">Apoptosis</keyword>
<keyword id="KW-0903">Direct protein sequencing</keyword>
<keyword id="KW-0249">Electron transport</keyword>
<keyword id="KW-0349">Heme</keyword>
<keyword id="KW-0408">Iron</keyword>
<keyword id="KW-0479">Metal-binding</keyword>
<keyword id="KW-0496">Mitochondrion</keyword>
<keyword id="KW-0597">Phosphoprotein</keyword>
<keyword id="KW-1185">Reference proteome</keyword>
<keyword id="KW-0679">Respiratory chain</keyword>
<keyword id="KW-0813">Transport</keyword>
<gene>
    <name type="primary">Cycs</name>
</gene>
<feature type="initiator methionine" description="Removed" evidence="4">
    <location>
        <position position="1"/>
    </location>
</feature>
<feature type="chain" id="PRO_0000108225" description="Cytochrome c, somatic">
    <location>
        <begin position="2"/>
        <end position="105"/>
    </location>
</feature>
<feature type="binding site" description="covalent">
    <location>
        <position position="15"/>
    </location>
    <ligand>
        <name>heme c</name>
        <dbReference type="ChEBI" id="CHEBI:61717"/>
    </ligand>
</feature>
<feature type="binding site" description="covalent">
    <location>
        <position position="18"/>
    </location>
    <ligand>
        <name>heme c</name>
        <dbReference type="ChEBI" id="CHEBI:61717"/>
    </ligand>
</feature>
<feature type="binding site" description="axial binding residue">
    <location>
        <position position="19"/>
    </location>
    <ligand>
        <name>heme c</name>
        <dbReference type="ChEBI" id="CHEBI:61717"/>
    </ligand>
    <ligandPart>
        <name>Fe</name>
        <dbReference type="ChEBI" id="CHEBI:18248"/>
    </ligandPart>
</feature>
<feature type="binding site" description="axial binding residue">
    <location>
        <position position="81"/>
    </location>
    <ligand>
        <name>heme c</name>
        <dbReference type="ChEBI" id="CHEBI:61717"/>
    </ligand>
    <ligandPart>
        <name>Fe</name>
        <dbReference type="ChEBI" id="CHEBI:18248"/>
    </ligandPart>
</feature>
<feature type="modified residue" description="N-acetylglycine" evidence="4">
    <location>
        <position position="2"/>
    </location>
</feature>
<feature type="modified residue" description="Phosphotyrosine" evidence="2">
    <location>
        <position position="49"/>
    </location>
</feature>
<feature type="modified residue" description="N6-succinyllysine" evidence="7">
    <location>
        <position position="56"/>
    </location>
</feature>
<feature type="modified residue" description="N6-acetyllysine; alternate" evidence="6">
    <location>
        <position position="73"/>
    </location>
</feature>
<feature type="modified residue" description="N6-succinyllysine; alternate" evidence="7">
    <location>
        <position position="73"/>
    </location>
</feature>
<feature type="modified residue" description="Phosphotyrosine" evidence="2">
    <location>
        <position position="98"/>
    </location>
</feature>
<feature type="modified residue" description="N6-acetyllysine" evidence="6">
    <location>
        <position position="100"/>
    </location>
</feature>
<proteinExistence type="evidence at protein level"/>
<reference key="1">
    <citation type="journal article" date="1985" name="Nucleic Acids Res.">
        <title>Characterization of a mouse somatic cytochrome c gene and three cytochrome c pseudogenes.</title>
        <authorList>
            <person name="Limbach K.J."/>
            <person name="Wu R."/>
        </authorList>
    </citation>
    <scope>NUCLEOTIDE SEQUENCE [GENOMIC DNA]</scope>
    <source>
        <strain>BALB/cJ</strain>
    </source>
</reference>
<reference key="2">
    <citation type="journal article" date="2005" name="Science">
        <title>The transcriptional landscape of the mammalian genome.</title>
        <authorList>
            <person name="Carninci P."/>
            <person name="Kasukawa T."/>
            <person name="Katayama S."/>
            <person name="Gough J."/>
            <person name="Frith M.C."/>
            <person name="Maeda N."/>
            <person name="Oyama R."/>
            <person name="Ravasi T."/>
            <person name="Lenhard B."/>
            <person name="Wells C."/>
            <person name="Kodzius R."/>
            <person name="Shimokawa K."/>
            <person name="Bajic V.B."/>
            <person name="Brenner S.E."/>
            <person name="Batalov S."/>
            <person name="Forrest A.R."/>
            <person name="Zavolan M."/>
            <person name="Davis M.J."/>
            <person name="Wilming L.G."/>
            <person name="Aidinis V."/>
            <person name="Allen J.E."/>
            <person name="Ambesi-Impiombato A."/>
            <person name="Apweiler R."/>
            <person name="Aturaliya R.N."/>
            <person name="Bailey T.L."/>
            <person name="Bansal M."/>
            <person name="Baxter L."/>
            <person name="Beisel K.W."/>
            <person name="Bersano T."/>
            <person name="Bono H."/>
            <person name="Chalk A.M."/>
            <person name="Chiu K.P."/>
            <person name="Choudhary V."/>
            <person name="Christoffels A."/>
            <person name="Clutterbuck D.R."/>
            <person name="Crowe M.L."/>
            <person name="Dalla E."/>
            <person name="Dalrymple B.P."/>
            <person name="de Bono B."/>
            <person name="Della Gatta G."/>
            <person name="di Bernardo D."/>
            <person name="Down T."/>
            <person name="Engstrom P."/>
            <person name="Fagiolini M."/>
            <person name="Faulkner G."/>
            <person name="Fletcher C.F."/>
            <person name="Fukushima T."/>
            <person name="Furuno M."/>
            <person name="Futaki S."/>
            <person name="Gariboldi M."/>
            <person name="Georgii-Hemming P."/>
            <person name="Gingeras T.R."/>
            <person name="Gojobori T."/>
            <person name="Green R.E."/>
            <person name="Gustincich S."/>
            <person name="Harbers M."/>
            <person name="Hayashi Y."/>
            <person name="Hensch T.K."/>
            <person name="Hirokawa N."/>
            <person name="Hill D."/>
            <person name="Huminiecki L."/>
            <person name="Iacono M."/>
            <person name="Ikeo K."/>
            <person name="Iwama A."/>
            <person name="Ishikawa T."/>
            <person name="Jakt M."/>
            <person name="Kanapin A."/>
            <person name="Katoh M."/>
            <person name="Kawasawa Y."/>
            <person name="Kelso J."/>
            <person name="Kitamura H."/>
            <person name="Kitano H."/>
            <person name="Kollias G."/>
            <person name="Krishnan S.P."/>
            <person name="Kruger A."/>
            <person name="Kummerfeld S.K."/>
            <person name="Kurochkin I.V."/>
            <person name="Lareau L.F."/>
            <person name="Lazarevic D."/>
            <person name="Lipovich L."/>
            <person name="Liu J."/>
            <person name="Liuni S."/>
            <person name="McWilliam S."/>
            <person name="Madan Babu M."/>
            <person name="Madera M."/>
            <person name="Marchionni L."/>
            <person name="Matsuda H."/>
            <person name="Matsuzawa S."/>
            <person name="Miki H."/>
            <person name="Mignone F."/>
            <person name="Miyake S."/>
            <person name="Morris K."/>
            <person name="Mottagui-Tabar S."/>
            <person name="Mulder N."/>
            <person name="Nakano N."/>
            <person name="Nakauchi H."/>
            <person name="Ng P."/>
            <person name="Nilsson R."/>
            <person name="Nishiguchi S."/>
            <person name="Nishikawa S."/>
            <person name="Nori F."/>
            <person name="Ohara O."/>
            <person name="Okazaki Y."/>
            <person name="Orlando V."/>
            <person name="Pang K.C."/>
            <person name="Pavan W.J."/>
            <person name="Pavesi G."/>
            <person name="Pesole G."/>
            <person name="Petrovsky N."/>
            <person name="Piazza S."/>
            <person name="Reed J."/>
            <person name="Reid J.F."/>
            <person name="Ring B.Z."/>
            <person name="Ringwald M."/>
            <person name="Rost B."/>
            <person name="Ruan Y."/>
            <person name="Salzberg S.L."/>
            <person name="Sandelin A."/>
            <person name="Schneider C."/>
            <person name="Schoenbach C."/>
            <person name="Sekiguchi K."/>
            <person name="Semple C.A."/>
            <person name="Seno S."/>
            <person name="Sessa L."/>
            <person name="Sheng Y."/>
            <person name="Shibata Y."/>
            <person name="Shimada H."/>
            <person name="Shimada K."/>
            <person name="Silva D."/>
            <person name="Sinclair B."/>
            <person name="Sperling S."/>
            <person name="Stupka E."/>
            <person name="Sugiura K."/>
            <person name="Sultana R."/>
            <person name="Takenaka Y."/>
            <person name="Taki K."/>
            <person name="Tammoja K."/>
            <person name="Tan S.L."/>
            <person name="Tang S."/>
            <person name="Taylor M.S."/>
            <person name="Tegner J."/>
            <person name="Teichmann S.A."/>
            <person name="Ueda H.R."/>
            <person name="van Nimwegen E."/>
            <person name="Verardo R."/>
            <person name="Wei C.L."/>
            <person name="Yagi K."/>
            <person name="Yamanishi H."/>
            <person name="Zabarovsky E."/>
            <person name="Zhu S."/>
            <person name="Zimmer A."/>
            <person name="Hide W."/>
            <person name="Bult C."/>
            <person name="Grimmond S.M."/>
            <person name="Teasdale R.D."/>
            <person name="Liu E.T."/>
            <person name="Brusic V."/>
            <person name="Quackenbush J."/>
            <person name="Wahlestedt C."/>
            <person name="Mattick J.S."/>
            <person name="Hume D.A."/>
            <person name="Kai C."/>
            <person name="Sasaki D."/>
            <person name="Tomaru Y."/>
            <person name="Fukuda S."/>
            <person name="Kanamori-Katayama M."/>
            <person name="Suzuki M."/>
            <person name="Aoki J."/>
            <person name="Arakawa T."/>
            <person name="Iida J."/>
            <person name="Imamura K."/>
            <person name="Itoh M."/>
            <person name="Kato T."/>
            <person name="Kawaji H."/>
            <person name="Kawagashira N."/>
            <person name="Kawashima T."/>
            <person name="Kojima M."/>
            <person name="Kondo S."/>
            <person name="Konno H."/>
            <person name="Nakano K."/>
            <person name="Ninomiya N."/>
            <person name="Nishio T."/>
            <person name="Okada M."/>
            <person name="Plessy C."/>
            <person name="Shibata K."/>
            <person name="Shiraki T."/>
            <person name="Suzuki S."/>
            <person name="Tagami M."/>
            <person name="Waki K."/>
            <person name="Watahiki A."/>
            <person name="Okamura-Oho Y."/>
            <person name="Suzuki H."/>
            <person name="Kawai J."/>
            <person name="Hayashizaki Y."/>
        </authorList>
    </citation>
    <scope>NUCLEOTIDE SEQUENCE [LARGE SCALE MRNA]</scope>
    <source>
        <strain>NOD</strain>
        <tissue>Thymus</tissue>
    </source>
</reference>
<reference key="3">
    <citation type="journal article" date="2004" name="Genome Res.">
        <title>The status, quality, and expansion of the NIH full-length cDNA project: the Mammalian Gene Collection (MGC).</title>
        <authorList>
            <consortium name="The MGC Project Team"/>
        </authorList>
    </citation>
    <scope>NUCLEOTIDE SEQUENCE [LARGE SCALE MRNA]</scope>
    <source>
        <strain>Czech II</strain>
    </source>
</reference>
<reference key="4">
    <citation type="journal article" date="1977" name="Biochemistry">
        <title>Primary structure of mouse, rat, and guinea pig cytochrome c.</title>
        <authorList>
            <person name="Carlson S.S."/>
            <person name="Mross G.A."/>
            <person name="Wilson A.C."/>
            <person name="Mead R.T."/>
            <person name="Wolin L.D."/>
            <person name="Bowers S.F."/>
            <person name="Foley N.T."/>
            <person name="Muijsers A.O."/>
            <person name="Margoliash E."/>
        </authorList>
    </citation>
    <scope>PROTEIN SEQUENCE OF 2-105</scope>
    <scope>ACETYLATION AT GLY-2</scope>
    <source>
        <strain>BALB/cJ</strain>
    </source>
</reference>
<reference key="5">
    <citation type="submission" date="2007-04" db="UniProtKB">
        <authorList>
            <person name="Lubec G."/>
            <person name="Kang S.U."/>
        </authorList>
    </citation>
    <scope>PROTEIN SEQUENCE OF 29-54; 57-74; 81-88 AND 93-100</scope>
    <scope>IDENTIFICATION BY MASS SPECTROMETRY</scope>
    <source>
        <strain>C57BL/6J</strain>
        <tissue>Brain</tissue>
    </source>
</reference>
<reference key="6">
    <citation type="journal article" date="1975" name="Eur. J. Biochem.">
        <title>Change of cytochrome c structure during development of the mouse.</title>
        <authorList>
            <person name="Hennig B."/>
        </authorList>
    </citation>
    <scope>AMINO-ACID COMPOSITION OF TRYPTIC PEPTIDES</scope>
    <source>
        <strain>BALB/cJ</strain>
    </source>
</reference>
<reference key="7">
    <citation type="journal article" date="2002" name="FEBS Lett.">
        <title>Nuclear Apaf-1 and cytochrome c redistribution following stress-induced apoptosis.</title>
        <authorList>
            <person name="Ruiz-Vela A."/>
            <person name="Gonzalez de Buitrago G."/>
            <person name="Martinez-A C."/>
        </authorList>
    </citation>
    <scope>FUNCTION IN APOPTOSIS</scope>
</reference>
<reference key="8">
    <citation type="journal article" date="2010" name="Cell">
        <title>A tissue-specific atlas of mouse protein phosphorylation and expression.</title>
        <authorList>
            <person name="Huttlin E.L."/>
            <person name="Jedrychowski M.P."/>
            <person name="Elias J.E."/>
            <person name="Goswami T."/>
            <person name="Rad R."/>
            <person name="Beausoleil S.A."/>
            <person name="Villen J."/>
            <person name="Haas W."/>
            <person name="Sowa M.E."/>
            <person name="Gygi S.P."/>
        </authorList>
    </citation>
    <scope>IDENTIFICATION BY MASS SPECTROMETRY [LARGE SCALE ANALYSIS]</scope>
    <source>
        <tissue>Brain</tissue>
        <tissue>Brown adipose tissue</tissue>
        <tissue>Heart</tissue>
        <tissue>Kidney</tissue>
        <tissue>Liver</tissue>
        <tissue>Lung</tissue>
        <tissue>Pancreas</tissue>
        <tissue>Spleen</tissue>
        <tissue>Testis</tissue>
    </source>
</reference>
<reference key="9">
    <citation type="journal article" date="2013" name="Mol. Cell">
        <title>SIRT5-mediated lysine desuccinylation impacts diverse metabolic pathways.</title>
        <authorList>
            <person name="Park J."/>
            <person name="Chen Y."/>
            <person name="Tishkoff D.X."/>
            <person name="Peng C."/>
            <person name="Tan M."/>
            <person name="Dai L."/>
            <person name="Xie Z."/>
            <person name="Zhang Y."/>
            <person name="Zwaans B.M."/>
            <person name="Skinner M.E."/>
            <person name="Lombard D.B."/>
            <person name="Zhao Y."/>
        </authorList>
    </citation>
    <scope>SUCCINYLATION [LARGE SCALE ANALYSIS] AT LYS-56 AND LYS-73</scope>
    <scope>IDENTIFICATION BY MASS SPECTROMETRY [LARGE SCALE ANALYSIS]</scope>
    <source>
        <tissue>Liver</tissue>
    </source>
</reference>
<reference key="10">
    <citation type="journal article" date="2013" name="Proc. Natl. Acad. Sci. U.S.A.">
        <title>Label-free quantitative proteomics of the lysine acetylome in mitochondria identifies substrates of SIRT3 in metabolic pathways.</title>
        <authorList>
            <person name="Rardin M.J."/>
            <person name="Newman J.C."/>
            <person name="Held J.M."/>
            <person name="Cusack M.P."/>
            <person name="Sorensen D.J."/>
            <person name="Li B."/>
            <person name="Schilling B."/>
            <person name="Mooney S.D."/>
            <person name="Kahn C.R."/>
            <person name="Verdin E."/>
            <person name="Gibson B.W."/>
        </authorList>
    </citation>
    <scope>ACETYLATION [LARGE SCALE ANALYSIS] AT LYS-73 AND LYS-100</scope>
    <scope>IDENTIFICATION BY MASS SPECTROMETRY [LARGE SCALE ANALYSIS]</scope>
    <source>
        <tissue>Liver</tissue>
    </source>
</reference>
<protein>
    <recommendedName>
        <fullName>Cytochrome c, somatic</fullName>
    </recommendedName>
</protein>
<dbReference type="EMBL" id="X01756">
    <property type="protein sequence ID" value="CAA25899.1"/>
    <property type="molecule type" value="Genomic_DNA"/>
</dbReference>
<dbReference type="EMBL" id="AK088098">
    <property type="protein sequence ID" value="BAC40143.1"/>
    <property type="molecule type" value="mRNA"/>
</dbReference>
<dbReference type="EMBL" id="BC034363">
    <property type="protein sequence ID" value="AAH34363.1"/>
    <property type="molecule type" value="mRNA"/>
</dbReference>
<dbReference type="CCDS" id="CCDS20131.1"/>
<dbReference type="PIR" id="A23057">
    <property type="entry name" value="CCMS"/>
</dbReference>
<dbReference type="RefSeq" id="NP_031834.1">
    <property type="nucleotide sequence ID" value="NM_007808.5"/>
</dbReference>
<dbReference type="SMR" id="P62897"/>
<dbReference type="BioGRID" id="198992">
    <property type="interactions" value="78"/>
</dbReference>
<dbReference type="ComplexPortal" id="CPX-3824">
    <property type="entry name" value="Apoptosome"/>
</dbReference>
<dbReference type="FunCoup" id="P62897">
    <property type="interactions" value="2498"/>
</dbReference>
<dbReference type="IntAct" id="P62897">
    <property type="interactions" value="3"/>
</dbReference>
<dbReference type="STRING" id="10090.ENSMUSP00000072829"/>
<dbReference type="GlyGen" id="P62897">
    <property type="glycosylation" value="1 site, 1 O-linked glycan (1 site)"/>
</dbReference>
<dbReference type="iPTMnet" id="P62897"/>
<dbReference type="MetOSite" id="P62897"/>
<dbReference type="PhosphoSitePlus" id="P62897"/>
<dbReference type="SwissPalm" id="P62897"/>
<dbReference type="CPTAC" id="non-CPTAC-3783"/>
<dbReference type="jPOST" id="P62897"/>
<dbReference type="PaxDb" id="10090-ENSMUSP00000072829"/>
<dbReference type="ProteomicsDB" id="285438"/>
<dbReference type="Pumba" id="P62897"/>
<dbReference type="ABCD" id="P62897">
    <property type="antibodies" value="26 sequenced antibodies"/>
</dbReference>
<dbReference type="DNASU" id="13063"/>
<dbReference type="Ensembl" id="ENSMUST00000073080.7">
    <property type="protein sequence ID" value="ENSMUSP00000072829.6"/>
    <property type="gene ID" value="ENSMUSG00000058927.7"/>
</dbReference>
<dbReference type="Ensembl" id="ENSMUST00000161401.2">
    <property type="protein sequence ID" value="ENSMUSP00000124523.2"/>
    <property type="gene ID" value="ENSMUSG00000063694.6"/>
</dbReference>
<dbReference type="GeneID" id="13063"/>
<dbReference type="KEGG" id="mmu:13063"/>
<dbReference type="UCSC" id="uc009bxc.1">
    <property type="organism name" value="mouse"/>
</dbReference>
<dbReference type="AGR" id="MGI:88578"/>
<dbReference type="CTD" id="54205"/>
<dbReference type="MGI" id="MGI:88578">
    <property type="gene designation" value="Cycs"/>
</dbReference>
<dbReference type="VEuPathDB" id="HostDB:ENSMUSG00000058927"/>
<dbReference type="VEuPathDB" id="HostDB:ENSMUSG00000063694"/>
<dbReference type="eggNOG" id="KOG3453">
    <property type="taxonomic scope" value="Eukaryota"/>
</dbReference>
<dbReference type="GeneTree" id="ENSGT00390000009405"/>
<dbReference type="HOGENOM" id="CLU_060944_3_0_1"/>
<dbReference type="InParanoid" id="P62897"/>
<dbReference type="OMA" id="ARCKACH"/>
<dbReference type="OrthoDB" id="9854531at2759"/>
<dbReference type="PhylomeDB" id="P62897"/>
<dbReference type="TreeFam" id="TF300226"/>
<dbReference type="Reactome" id="R-MMU-111457">
    <property type="pathway name" value="Release of apoptotic factors from the mitochondria"/>
</dbReference>
<dbReference type="Reactome" id="R-MMU-111458">
    <property type="pathway name" value="Formation of apoptosome"/>
</dbReference>
<dbReference type="Reactome" id="R-MMU-111459">
    <property type="pathway name" value="Activation of caspases through apoptosome-mediated cleavage"/>
</dbReference>
<dbReference type="Reactome" id="R-MMU-2151201">
    <property type="pathway name" value="Transcriptional activation of mitochondrial biogenesis"/>
</dbReference>
<dbReference type="Reactome" id="R-MMU-3299685">
    <property type="pathway name" value="Detoxification of Reactive Oxygen Species"/>
</dbReference>
<dbReference type="Reactome" id="R-MMU-5620971">
    <property type="pathway name" value="Pyroptosis"/>
</dbReference>
<dbReference type="Reactome" id="R-MMU-5628897">
    <property type="pathway name" value="TP53 Regulates Metabolic Genes"/>
</dbReference>
<dbReference type="Reactome" id="R-MMU-611105">
    <property type="pathway name" value="Respiratory electron transport"/>
</dbReference>
<dbReference type="Reactome" id="R-MMU-9627069">
    <property type="pathway name" value="Regulation of the apoptosome activity"/>
</dbReference>
<dbReference type="Reactome" id="R-MMU-9707564">
    <property type="pathway name" value="Cytoprotection by HMOX1"/>
</dbReference>
<dbReference type="BioGRID-ORCS" id="13063">
    <property type="hits" value="22 hits in 57 CRISPR screens"/>
</dbReference>
<dbReference type="ChiTaRS" id="Cycs">
    <property type="organism name" value="mouse"/>
</dbReference>
<dbReference type="PRO" id="PR:P62897"/>
<dbReference type="Proteomes" id="UP000000589">
    <property type="component" value="Chromosome 19"/>
</dbReference>
<dbReference type="Proteomes" id="UP000000589">
    <property type="component" value="Chromosome 6"/>
</dbReference>
<dbReference type="RNAct" id="P62897">
    <property type="molecule type" value="protein"/>
</dbReference>
<dbReference type="Bgee" id="ENSMUSG00000058927">
    <property type="expression patterns" value="Expressed in right kidney and 63 other cell types or tissues"/>
</dbReference>
<dbReference type="ExpressionAtlas" id="P62897">
    <property type="expression patterns" value="baseline and differential"/>
</dbReference>
<dbReference type="GO" id="GO:0043293">
    <property type="term" value="C:apoptosome"/>
    <property type="evidence" value="ECO:0000266"/>
    <property type="project" value="ComplexPortal"/>
</dbReference>
<dbReference type="GO" id="GO:0005829">
    <property type="term" value="C:cytosol"/>
    <property type="evidence" value="ECO:0000314"/>
    <property type="project" value="MGI"/>
</dbReference>
<dbReference type="GO" id="GO:0005758">
    <property type="term" value="C:mitochondrial intermembrane space"/>
    <property type="evidence" value="ECO:0007669"/>
    <property type="project" value="UniProtKB-SubCell"/>
</dbReference>
<dbReference type="GO" id="GO:0005739">
    <property type="term" value="C:mitochondrion"/>
    <property type="evidence" value="ECO:0000314"/>
    <property type="project" value="MGI"/>
</dbReference>
<dbReference type="GO" id="GO:0043209">
    <property type="term" value="C:myelin sheath"/>
    <property type="evidence" value="ECO:0007005"/>
    <property type="project" value="UniProtKB"/>
</dbReference>
<dbReference type="GO" id="GO:0009055">
    <property type="term" value="F:electron transfer activity"/>
    <property type="evidence" value="ECO:0007669"/>
    <property type="project" value="InterPro"/>
</dbReference>
<dbReference type="GO" id="GO:0020037">
    <property type="term" value="F:heme binding"/>
    <property type="evidence" value="ECO:0000314"/>
    <property type="project" value="MGI"/>
</dbReference>
<dbReference type="GO" id="GO:0046872">
    <property type="term" value="F:metal ion binding"/>
    <property type="evidence" value="ECO:0007669"/>
    <property type="project" value="UniProtKB-KW"/>
</dbReference>
<dbReference type="GO" id="GO:0006915">
    <property type="term" value="P:apoptotic process"/>
    <property type="evidence" value="ECO:0000314"/>
    <property type="project" value="MGI"/>
</dbReference>
<dbReference type="GO" id="GO:0042743">
    <property type="term" value="P:hydrogen peroxide metabolic process"/>
    <property type="evidence" value="ECO:0000314"/>
    <property type="project" value="MGI"/>
</dbReference>
<dbReference type="GO" id="GO:0097193">
    <property type="term" value="P:intrinsic apoptotic signaling pathway"/>
    <property type="evidence" value="ECO:0000303"/>
    <property type="project" value="ComplexPortal"/>
</dbReference>
<dbReference type="FunFam" id="1.10.760.10:FF:000008">
    <property type="entry name" value="Cytochrome c"/>
    <property type="match status" value="1"/>
</dbReference>
<dbReference type="Gene3D" id="1.10.760.10">
    <property type="entry name" value="Cytochrome c-like domain"/>
    <property type="match status" value="1"/>
</dbReference>
<dbReference type="InterPro" id="IPR009056">
    <property type="entry name" value="Cyt_c-like_dom"/>
</dbReference>
<dbReference type="InterPro" id="IPR036909">
    <property type="entry name" value="Cyt_c-like_dom_sf"/>
</dbReference>
<dbReference type="InterPro" id="IPR002327">
    <property type="entry name" value="Cyt_c_1A/1B"/>
</dbReference>
<dbReference type="PANTHER" id="PTHR11961">
    <property type="entry name" value="CYTOCHROME C"/>
    <property type="match status" value="1"/>
</dbReference>
<dbReference type="Pfam" id="PF00034">
    <property type="entry name" value="Cytochrom_C"/>
    <property type="match status" value="1"/>
</dbReference>
<dbReference type="PRINTS" id="PR00604">
    <property type="entry name" value="CYTCHRMECIAB"/>
</dbReference>
<dbReference type="SUPFAM" id="SSF46626">
    <property type="entry name" value="Cytochrome c"/>
    <property type="match status" value="1"/>
</dbReference>
<dbReference type="PROSITE" id="PS51007">
    <property type="entry name" value="CYTC"/>
    <property type="match status" value="1"/>
</dbReference>